<protein>
    <recommendedName>
        <fullName>Putative oxidoreductase C1F5.03c</fullName>
        <ecNumber>1.-.-.-</ecNumber>
    </recommendedName>
</protein>
<proteinExistence type="inferred from homology"/>
<gene>
    <name type="ORF">SPAC1F5.03c</name>
</gene>
<name>YAM3_SCHPO</name>
<keyword id="KW-0963">Cytoplasm</keyword>
<keyword id="KW-0472">Membrane</keyword>
<keyword id="KW-0560">Oxidoreductase</keyword>
<keyword id="KW-1185">Reference proteome</keyword>
<keyword id="KW-0812">Transmembrane</keyword>
<keyword id="KW-1133">Transmembrane helix</keyword>
<keyword id="KW-0813">Transport</keyword>
<sequence>MSNSRNIVIVGGGITGVSCLYFLAHHPSFNRDRDTITLFESAGIASAASGKASGFLSLEWHGPSTSSLAALSYNLHKELSDQYDGVNKWGYRALDTWSIKADENCQQPDKLPEGIEWIAPSIVENVTRLGNKKNSGQVHPYKFCHAIYEEASKVANVTLVKGHVLSVDENEVEYRLIGDDYAPDEEEEITSAEELHTIHSMEATHIIVAAGPWTPQLIPNLRISGARIHSITIDLPIKLNGNAVFSEITYKDGTIAAPEFYAREDELYVCGEFDDEPLPELSSDTKVDQDKCALIKQCANHFHQIIRDSPVKVRQACYLPISNATGAPVIGKIGSSIYVAAAHGCWGITLGPGTGKVLSELILDGAVTSANIDLLDPEGSLE</sequence>
<comment type="function">
    <text evidence="1">Putative oxidoreductase that negatively regulates the retrieval of cargo from late endosomes to the Golgi.</text>
</comment>
<comment type="subcellular location">
    <subcellularLocation>
        <location evidence="3">Cytoplasm</location>
    </subcellularLocation>
    <subcellularLocation>
        <location evidence="4">Membrane</location>
        <topology evidence="4">Single-pass membrane protein</topology>
    </subcellularLocation>
</comment>
<comment type="similarity">
    <text evidence="4">Belongs to the TDA3 family.</text>
</comment>
<evidence type="ECO:0000250" key="1"/>
<evidence type="ECO:0000255" key="2"/>
<evidence type="ECO:0000269" key="3">
    <source>
    </source>
</evidence>
<evidence type="ECO:0000305" key="4"/>
<reference key="1">
    <citation type="journal article" date="2002" name="Nature">
        <title>The genome sequence of Schizosaccharomyces pombe.</title>
        <authorList>
            <person name="Wood V."/>
            <person name="Gwilliam R."/>
            <person name="Rajandream M.A."/>
            <person name="Lyne M.H."/>
            <person name="Lyne R."/>
            <person name="Stewart A."/>
            <person name="Sgouros J.G."/>
            <person name="Peat N."/>
            <person name="Hayles J."/>
            <person name="Baker S.G."/>
            <person name="Basham D."/>
            <person name="Bowman S."/>
            <person name="Brooks K."/>
            <person name="Brown D."/>
            <person name="Brown S."/>
            <person name="Chillingworth T."/>
            <person name="Churcher C.M."/>
            <person name="Collins M."/>
            <person name="Connor R."/>
            <person name="Cronin A."/>
            <person name="Davis P."/>
            <person name="Feltwell T."/>
            <person name="Fraser A."/>
            <person name="Gentles S."/>
            <person name="Goble A."/>
            <person name="Hamlin N."/>
            <person name="Harris D.E."/>
            <person name="Hidalgo J."/>
            <person name="Hodgson G."/>
            <person name="Holroyd S."/>
            <person name="Hornsby T."/>
            <person name="Howarth S."/>
            <person name="Huckle E.J."/>
            <person name="Hunt S."/>
            <person name="Jagels K."/>
            <person name="James K.D."/>
            <person name="Jones L."/>
            <person name="Jones M."/>
            <person name="Leather S."/>
            <person name="McDonald S."/>
            <person name="McLean J."/>
            <person name="Mooney P."/>
            <person name="Moule S."/>
            <person name="Mungall K.L."/>
            <person name="Murphy L.D."/>
            <person name="Niblett D."/>
            <person name="Odell C."/>
            <person name="Oliver K."/>
            <person name="O'Neil S."/>
            <person name="Pearson D."/>
            <person name="Quail M.A."/>
            <person name="Rabbinowitsch E."/>
            <person name="Rutherford K.M."/>
            <person name="Rutter S."/>
            <person name="Saunders D."/>
            <person name="Seeger K."/>
            <person name="Sharp S."/>
            <person name="Skelton J."/>
            <person name="Simmonds M.N."/>
            <person name="Squares R."/>
            <person name="Squares S."/>
            <person name="Stevens K."/>
            <person name="Taylor K."/>
            <person name="Taylor R.G."/>
            <person name="Tivey A."/>
            <person name="Walsh S.V."/>
            <person name="Warren T."/>
            <person name="Whitehead S."/>
            <person name="Woodward J.R."/>
            <person name="Volckaert G."/>
            <person name="Aert R."/>
            <person name="Robben J."/>
            <person name="Grymonprez B."/>
            <person name="Weltjens I."/>
            <person name="Vanstreels E."/>
            <person name="Rieger M."/>
            <person name="Schaefer M."/>
            <person name="Mueller-Auer S."/>
            <person name="Gabel C."/>
            <person name="Fuchs M."/>
            <person name="Duesterhoeft A."/>
            <person name="Fritzc C."/>
            <person name="Holzer E."/>
            <person name="Moestl D."/>
            <person name="Hilbert H."/>
            <person name="Borzym K."/>
            <person name="Langer I."/>
            <person name="Beck A."/>
            <person name="Lehrach H."/>
            <person name="Reinhardt R."/>
            <person name="Pohl T.M."/>
            <person name="Eger P."/>
            <person name="Zimmermann W."/>
            <person name="Wedler H."/>
            <person name="Wambutt R."/>
            <person name="Purnelle B."/>
            <person name="Goffeau A."/>
            <person name="Cadieu E."/>
            <person name="Dreano S."/>
            <person name="Gloux S."/>
            <person name="Lelaure V."/>
            <person name="Mottier S."/>
            <person name="Galibert F."/>
            <person name="Aves S.J."/>
            <person name="Xiang Z."/>
            <person name="Hunt C."/>
            <person name="Moore K."/>
            <person name="Hurst S.M."/>
            <person name="Lucas M."/>
            <person name="Rochet M."/>
            <person name="Gaillardin C."/>
            <person name="Tallada V.A."/>
            <person name="Garzon A."/>
            <person name="Thode G."/>
            <person name="Daga R.R."/>
            <person name="Cruzado L."/>
            <person name="Jimenez J."/>
            <person name="Sanchez M."/>
            <person name="del Rey F."/>
            <person name="Benito J."/>
            <person name="Dominguez A."/>
            <person name="Revuelta J.L."/>
            <person name="Moreno S."/>
            <person name="Armstrong J."/>
            <person name="Forsburg S.L."/>
            <person name="Cerutti L."/>
            <person name="Lowe T."/>
            <person name="McCombie W.R."/>
            <person name="Paulsen I."/>
            <person name="Potashkin J."/>
            <person name="Shpakovski G.V."/>
            <person name="Ussery D."/>
            <person name="Barrell B.G."/>
            <person name="Nurse P."/>
        </authorList>
    </citation>
    <scope>NUCLEOTIDE SEQUENCE [LARGE SCALE GENOMIC DNA]</scope>
    <source>
        <strain>972 / ATCC 24843</strain>
    </source>
</reference>
<reference key="2">
    <citation type="journal article" date="2006" name="Nat. Biotechnol.">
        <title>ORFeome cloning and global analysis of protein localization in the fission yeast Schizosaccharomyces pombe.</title>
        <authorList>
            <person name="Matsuyama A."/>
            <person name="Arai R."/>
            <person name="Yashiroda Y."/>
            <person name="Shirai A."/>
            <person name="Kamata A."/>
            <person name="Sekido S."/>
            <person name="Kobayashi Y."/>
            <person name="Hashimoto A."/>
            <person name="Hamamoto M."/>
            <person name="Hiraoka Y."/>
            <person name="Horinouchi S."/>
            <person name="Yoshida M."/>
        </authorList>
    </citation>
    <scope>SUBCELLULAR LOCATION [LARGE SCALE ANALYSIS]</scope>
</reference>
<dbReference type="EC" id="1.-.-.-"/>
<dbReference type="EMBL" id="CU329670">
    <property type="protein sequence ID" value="CAA92231.1"/>
    <property type="molecule type" value="Genomic_DNA"/>
</dbReference>
<dbReference type="PIR" id="T38092">
    <property type="entry name" value="T38092"/>
</dbReference>
<dbReference type="RefSeq" id="NP_592870.1">
    <property type="nucleotide sequence ID" value="NM_001018270.2"/>
</dbReference>
<dbReference type="SMR" id="Q10058"/>
<dbReference type="BioGRID" id="277973">
    <property type="interactions" value="20"/>
</dbReference>
<dbReference type="FunCoup" id="Q10058">
    <property type="interactions" value="74"/>
</dbReference>
<dbReference type="STRING" id="284812.Q10058"/>
<dbReference type="iPTMnet" id="Q10058"/>
<dbReference type="PaxDb" id="4896-SPAC1F5.03c.1"/>
<dbReference type="EnsemblFungi" id="SPAC1F5.03c.1">
    <property type="protein sequence ID" value="SPAC1F5.03c.1:pep"/>
    <property type="gene ID" value="SPAC1F5.03c"/>
</dbReference>
<dbReference type="KEGG" id="spo:2541471"/>
<dbReference type="PomBase" id="SPAC1F5.03c"/>
<dbReference type="VEuPathDB" id="FungiDB:SPAC1F5.03c"/>
<dbReference type="eggNOG" id="KOG2852">
    <property type="taxonomic scope" value="Eukaryota"/>
</dbReference>
<dbReference type="HOGENOM" id="CLU_007884_14_0_1"/>
<dbReference type="InParanoid" id="Q10058"/>
<dbReference type="OMA" id="NPAHDGI"/>
<dbReference type="PhylomeDB" id="Q10058"/>
<dbReference type="PRO" id="PR:Q10058"/>
<dbReference type="Proteomes" id="UP000002485">
    <property type="component" value="Chromosome I"/>
</dbReference>
<dbReference type="GO" id="GO:0005737">
    <property type="term" value="C:cytoplasm"/>
    <property type="evidence" value="ECO:0000318"/>
    <property type="project" value="GO_Central"/>
</dbReference>
<dbReference type="GO" id="GO:0005829">
    <property type="term" value="C:cytosol"/>
    <property type="evidence" value="ECO:0007669"/>
    <property type="project" value="GOC"/>
</dbReference>
<dbReference type="GO" id="GO:0005770">
    <property type="term" value="C:late endosome"/>
    <property type="evidence" value="ECO:0000318"/>
    <property type="project" value="GO_Central"/>
</dbReference>
<dbReference type="GO" id="GO:0016020">
    <property type="term" value="C:membrane"/>
    <property type="evidence" value="ECO:0007669"/>
    <property type="project" value="UniProtKB-SubCell"/>
</dbReference>
<dbReference type="GO" id="GO:0016491">
    <property type="term" value="F:oxidoreductase activity"/>
    <property type="evidence" value="ECO:0007669"/>
    <property type="project" value="UniProtKB-KW"/>
</dbReference>
<dbReference type="GO" id="GO:0042147">
    <property type="term" value="P:retrograde transport, endosome to Golgi"/>
    <property type="evidence" value="ECO:0000318"/>
    <property type="project" value="GO_Central"/>
</dbReference>
<dbReference type="Gene3D" id="3.30.9.10">
    <property type="entry name" value="D-Amino Acid Oxidase, subunit A, domain 2"/>
    <property type="match status" value="1"/>
</dbReference>
<dbReference type="Gene3D" id="3.50.50.60">
    <property type="entry name" value="FAD/NAD(P)-binding domain"/>
    <property type="match status" value="1"/>
</dbReference>
<dbReference type="InterPro" id="IPR006076">
    <property type="entry name" value="FAD-dep_OxRdtase"/>
</dbReference>
<dbReference type="InterPro" id="IPR036188">
    <property type="entry name" value="FAD/NAD-bd_sf"/>
</dbReference>
<dbReference type="PANTHER" id="PTHR13847:SF150">
    <property type="entry name" value="OXIDOREDUCTASE TDA3-RELATED"/>
    <property type="match status" value="1"/>
</dbReference>
<dbReference type="PANTHER" id="PTHR13847">
    <property type="entry name" value="SARCOSINE DEHYDROGENASE-RELATED"/>
    <property type="match status" value="1"/>
</dbReference>
<dbReference type="Pfam" id="PF01266">
    <property type="entry name" value="DAO"/>
    <property type="match status" value="1"/>
</dbReference>
<dbReference type="SUPFAM" id="SSF51905">
    <property type="entry name" value="FAD/NAD(P)-binding domain"/>
    <property type="match status" value="1"/>
</dbReference>
<organism>
    <name type="scientific">Schizosaccharomyces pombe (strain 972 / ATCC 24843)</name>
    <name type="common">Fission yeast</name>
    <dbReference type="NCBI Taxonomy" id="284812"/>
    <lineage>
        <taxon>Eukaryota</taxon>
        <taxon>Fungi</taxon>
        <taxon>Dikarya</taxon>
        <taxon>Ascomycota</taxon>
        <taxon>Taphrinomycotina</taxon>
        <taxon>Schizosaccharomycetes</taxon>
        <taxon>Schizosaccharomycetales</taxon>
        <taxon>Schizosaccharomycetaceae</taxon>
        <taxon>Schizosaccharomyces</taxon>
    </lineage>
</organism>
<accession>Q10058</accession>
<feature type="chain" id="PRO_0000116443" description="Putative oxidoreductase C1F5.03c">
    <location>
        <begin position="1"/>
        <end position="382"/>
    </location>
</feature>
<feature type="transmembrane region" description="Helical" evidence="2">
    <location>
        <begin position="7"/>
        <end position="27"/>
    </location>
</feature>